<keyword id="KW-0963">Cytoplasm</keyword>
<keyword id="KW-0378">Hydrolase</keyword>
<keyword id="KW-0546">Nucleotide metabolism</keyword>
<gene>
    <name type="primary">maf</name>
    <name type="ordered locus">BT9727_4188</name>
</gene>
<accession>Q6HD71</accession>
<reference key="1">
    <citation type="journal article" date="2006" name="J. Bacteriol.">
        <title>Pathogenomic sequence analysis of Bacillus cereus and Bacillus thuringiensis isolates closely related to Bacillus anthracis.</title>
        <authorList>
            <person name="Han C.S."/>
            <person name="Xie G."/>
            <person name="Challacombe J.F."/>
            <person name="Altherr M.R."/>
            <person name="Bhotika S.S."/>
            <person name="Bruce D."/>
            <person name="Campbell C.S."/>
            <person name="Campbell M.L."/>
            <person name="Chen J."/>
            <person name="Chertkov O."/>
            <person name="Cleland C."/>
            <person name="Dimitrijevic M."/>
            <person name="Doggett N.A."/>
            <person name="Fawcett J.J."/>
            <person name="Glavina T."/>
            <person name="Goodwin L.A."/>
            <person name="Hill K.K."/>
            <person name="Hitchcock P."/>
            <person name="Jackson P.J."/>
            <person name="Keim P."/>
            <person name="Kewalramani A.R."/>
            <person name="Longmire J."/>
            <person name="Lucas S."/>
            <person name="Malfatti S."/>
            <person name="McMurry K."/>
            <person name="Meincke L.J."/>
            <person name="Misra M."/>
            <person name="Moseman B.L."/>
            <person name="Mundt M."/>
            <person name="Munk A.C."/>
            <person name="Okinaka R.T."/>
            <person name="Parson-Quintana B."/>
            <person name="Reilly L.P."/>
            <person name="Richardson P."/>
            <person name="Robinson D.L."/>
            <person name="Rubin E."/>
            <person name="Saunders E."/>
            <person name="Tapia R."/>
            <person name="Tesmer J.G."/>
            <person name="Thayer N."/>
            <person name="Thompson L.S."/>
            <person name="Tice H."/>
            <person name="Ticknor L.O."/>
            <person name="Wills P.L."/>
            <person name="Brettin T.S."/>
            <person name="Gilna P."/>
        </authorList>
    </citation>
    <scope>NUCLEOTIDE SEQUENCE [LARGE SCALE GENOMIC DNA]</scope>
    <source>
        <strain>97-27</strain>
    </source>
</reference>
<sequence>MRKIILASGSPRRKELLELAGVPFEIIVSEVEETIGAYSSPSDIVMSLALQKASAVAENNSDYIVLGADTIVTYESRILGKPSNEAEAKEMLQLLSGKTHEVYTGVAIIAKDKTVTFYERTEVTFWELTEEEIDAYVASKEPLDKAGSYGIQGKGSIFVQHIQGDYYSVVGLPISRLVRELKQFNIDVTHA</sequence>
<name>NTPPA_BACHK</name>
<evidence type="ECO:0000255" key="1">
    <source>
        <dbReference type="HAMAP-Rule" id="MF_00528"/>
    </source>
</evidence>
<comment type="function">
    <text evidence="1">Nucleoside triphosphate pyrophosphatase that hydrolyzes dTTP and UTP. May have a dual role in cell division arrest and in preventing the incorporation of modified nucleotides into cellular nucleic acids.</text>
</comment>
<comment type="catalytic activity">
    <reaction evidence="1">
        <text>dTTP + H2O = dTMP + diphosphate + H(+)</text>
        <dbReference type="Rhea" id="RHEA:28534"/>
        <dbReference type="ChEBI" id="CHEBI:15377"/>
        <dbReference type="ChEBI" id="CHEBI:15378"/>
        <dbReference type="ChEBI" id="CHEBI:33019"/>
        <dbReference type="ChEBI" id="CHEBI:37568"/>
        <dbReference type="ChEBI" id="CHEBI:63528"/>
        <dbReference type="EC" id="3.6.1.9"/>
    </reaction>
</comment>
<comment type="catalytic activity">
    <reaction evidence="1">
        <text>UTP + H2O = UMP + diphosphate + H(+)</text>
        <dbReference type="Rhea" id="RHEA:29395"/>
        <dbReference type="ChEBI" id="CHEBI:15377"/>
        <dbReference type="ChEBI" id="CHEBI:15378"/>
        <dbReference type="ChEBI" id="CHEBI:33019"/>
        <dbReference type="ChEBI" id="CHEBI:46398"/>
        <dbReference type="ChEBI" id="CHEBI:57865"/>
        <dbReference type="EC" id="3.6.1.9"/>
    </reaction>
</comment>
<comment type="cofactor">
    <cofactor evidence="1">
        <name>a divalent metal cation</name>
        <dbReference type="ChEBI" id="CHEBI:60240"/>
    </cofactor>
</comment>
<comment type="subcellular location">
    <subcellularLocation>
        <location evidence="1">Cytoplasm</location>
    </subcellularLocation>
</comment>
<comment type="similarity">
    <text evidence="1">Belongs to the Maf family. YhdE subfamily.</text>
</comment>
<protein>
    <recommendedName>
        <fullName evidence="1">dTTP/UTP pyrophosphatase</fullName>
        <shortName evidence="1">dTTPase/UTPase</shortName>
        <ecNumber evidence="1">3.6.1.9</ecNumber>
    </recommendedName>
    <alternativeName>
        <fullName evidence="1">Nucleoside triphosphate pyrophosphatase</fullName>
    </alternativeName>
    <alternativeName>
        <fullName evidence="1">Nucleotide pyrophosphatase</fullName>
        <shortName evidence="1">Nucleotide PPase</shortName>
    </alternativeName>
</protein>
<proteinExistence type="inferred from homology"/>
<feature type="chain" id="PRO_0000267233" description="dTTP/UTP pyrophosphatase">
    <location>
        <begin position="1"/>
        <end position="191"/>
    </location>
</feature>
<feature type="active site" description="Proton acceptor" evidence="1">
    <location>
        <position position="69"/>
    </location>
</feature>
<feature type="site" description="Important for substrate specificity" evidence="1">
    <location>
        <position position="12"/>
    </location>
</feature>
<feature type="site" description="Important for substrate specificity" evidence="1">
    <location>
        <position position="70"/>
    </location>
</feature>
<feature type="site" description="Important for substrate specificity" evidence="1">
    <location>
        <position position="152"/>
    </location>
</feature>
<organism>
    <name type="scientific">Bacillus thuringiensis subsp. konkukian (strain 97-27)</name>
    <dbReference type="NCBI Taxonomy" id="281309"/>
    <lineage>
        <taxon>Bacteria</taxon>
        <taxon>Bacillati</taxon>
        <taxon>Bacillota</taxon>
        <taxon>Bacilli</taxon>
        <taxon>Bacillales</taxon>
        <taxon>Bacillaceae</taxon>
        <taxon>Bacillus</taxon>
        <taxon>Bacillus cereus group</taxon>
    </lineage>
</organism>
<dbReference type="EC" id="3.6.1.9" evidence="1"/>
<dbReference type="EMBL" id="AE017355">
    <property type="protein sequence ID" value="AAT60842.1"/>
    <property type="molecule type" value="Genomic_DNA"/>
</dbReference>
<dbReference type="RefSeq" id="WP_001226275.1">
    <property type="nucleotide sequence ID" value="NC_005957.1"/>
</dbReference>
<dbReference type="RefSeq" id="YP_038505.1">
    <property type="nucleotide sequence ID" value="NC_005957.1"/>
</dbReference>
<dbReference type="SMR" id="Q6HD71"/>
<dbReference type="KEGG" id="btk:BT9727_4188"/>
<dbReference type="PATRIC" id="fig|281309.8.peg.4466"/>
<dbReference type="HOGENOM" id="CLU_040416_0_0_9"/>
<dbReference type="Proteomes" id="UP000001301">
    <property type="component" value="Chromosome"/>
</dbReference>
<dbReference type="GO" id="GO:0005737">
    <property type="term" value="C:cytoplasm"/>
    <property type="evidence" value="ECO:0007669"/>
    <property type="project" value="UniProtKB-SubCell"/>
</dbReference>
<dbReference type="GO" id="GO:0036218">
    <property type="term" value="F:dTTP diphosphatase activity"/>
    <property type="evidence" value="ECO:0007669"/>
    <property type="project" value="RHEA"/>
</dbReference>
<dbReference type="GO" id="GO:0036221">
    <property type="term" value="F:UTP diphosphatase activity"/>
    <property type="evidence" value="ECO:0007669"/>
    <property type="project" value="RHEA"/>
</dbReference>
<dbReference type="GO" id="GO:0009117">
    <property type="term" value="P:nucleotide metabolic process"/>
    <property type="evidence" value="ECO:0007669"/>
    <property type="project" value="UniProtKB-KW"/>
</dbReference>
<dbReference type="CDD" id="cd00555">
    <property type="entry name" value="Maf"/>
    <property type="match status" value="1"/>
</dbReference>
<dbReference type="FunFam" id="3.90.950.10:FF:000007">
    <property type="entry name" value="dTTP/UTP pyrophosphatase"/>
    <property type="match status" value="1"/>
</dbReference>
<dbReference type="Gene3D" id="3.90.950.10">
    <property type="match status" value="1"/>
</dbReference>
<dbReference type="HAMAP" id="MF_00528">
    <property type="entry name" value="Maf"/>
    <property type="match status" value="1"/>
</dbReference>
<dbReference type="InterPro" id="IPR029001">
    <property type="entry name" value="ITPase-like_fam"/>
</dbReference>
<dbReference type="InterPro" id="IPR003697">
    <property type="entry name" value="Maf-like"/>
</dbReference>
<dbReference type="NCBIfam" id="TIGR00172">
    <property type="entry name" value="maf"/>
    <property type="match status" value="1"/>
</dbReference>
<dbReference type="PANTHER" id="PTHR43213">
    <property type="entry name" value="BIFUNCTIONAL DTTP/UTP PYROPHOSPHATASE/METHYLTRANSFERASE PROTEIN-RELATED"/>
    <property type="match status" value="1"/>
</dbReference>
<dbReference type="PANTHER" id="PTHR43213:SF5">
    <property type="entry name" value="BIFUNCTIONAL DTTP_UTP PYROPHOSPHATASE_METHYLTRANSFERASE PROTEIN-RELATED"/>
    <property type="match status" value="1"/>
</dbReference>
<dbReference type="Pfam" id="PF02545">
    <property type="entry name" value="Maf"/>
    <property type="match status" value="1"/>
</dbReference>
<dbReference type="PIRSF" id="PIRSF006305">
    <property type="entry name" value="Maf"/>
    <property type="match status" value="1"/>
</dbReference>
<dbReference type="SUPFAM" id="SSF52972">
    <property type="entry name" value="ITPase-like"/>
    <property type="match status" value="1"/>
</dbReference>